<proteinExistence type="inferred from homology"/>
<feature type="chain" id="PRO_0000306738" description="Small ribosomal subunit protein uS13">
    <location>
        <begin position="1"/>
        <end position="122"/>
    </location>
</feature>
<feature type="region of interest" description="Disordered" evidence="2">
    <location>
        <begin position="94"/>
        <end position="122"/>
    </location>
</feature>
<reference key="1">
    <citation type="journal article" date="2007" name="Proc. Natl. Acad. Sci. U.S.A.">
        <title>The genome of Syntrophus aciditrophicus: life at the thermodynamic limit of microbial growth.</title>
        <authorList>
            <person name="McInerney M.J."/>
            <person name="Rohlin L."/>
            <person name="Mouttaki H."/>
            <person name="Kim U."/>
            <person name="Krupp R.S."/>
            <person name="Rios-Hernandez L."/>
            <person name="Sieber J."/>
            <person name="Struchtemeyer C.G."/>
            <person name="Bhattacharyya A."/>
            <person name="Campbell J.W."/>
            <person name="Gunsalus R.P."/>
        </authorList>
    </citation>
    <scope>NUCLEOTIDE SEQUENCE [LARGE SCALE GENOMIC DNA]</scope>
    <source>
        <strain>SB</strain>
    </source>
</reference>
<name>RS13_SYNAS</name>
<sequence length="122" mass="13896">MARIAGVDLPKNKRMEIALTYIYGIGRTKAKEILEKAEISFDTKTDELADSEINAIRTIIDRDHKVEGDLRRDISMSIKRLMDVGAYRGLRHRKGLPVRGQRTHTNARTRKGPRRAIAGKKK</sequence>
<accession>Q2LQD2</accession>
<evidence type="ECO:0000255" key="1">
    <source>
        <dbReference type="HAMAP-Rule" id="MF_01315"/>
    </source>
</evidence>
<evidence type="ECO:0000256" key="2">
    <source>
        <dbReference type="SAM" id="MobiDB-lite"/>
    </source>
</evidence>
<evidence type="ECO:0000305" key="3"/>
<dbReference type="EMBL" id="CP000252">
    <property type="protein sequence ID" value="ABC76204.1"/>
    <property type="molecule type" value="Genomic_DNA"/>
</dbReference>
<dbReference type="RefSeq" id="WP_011416238.1">
    <property type="nucleotide sequence ID" value="NC_007759.1"/>
</dbReference>
<dbReference type="SMR" id="Q2LQD2"/>
<dbReference type="FunCoup" id="Q2LQD2">
    <property type="interactions" value="554"/>
</dbReference>
<dbReference type="STRING" id="56780.SYN_01598"/>
<dbReference type="KEGG" id="sat:SYN_01598"/>
<dbReference type="eggNOG" id="COG0099">
    <property type="taxonomic scope" value="Bacteria"/>
</dbReference>
<dbReference type="HOGENOM" id="CLU_103849_1_2_7"/>
<dbReference type="InParanoid" id="Q2LQD2"/>
<dbReference type="OrthoDB" id="9803610at2"/>
<dbReference type="Proteomes" id="UP000001933">
    <property type="component" value="Chromosome"/>
</dbReference>
<dbReference type="GO" id="GO:0005829">
    <property type="term" value="C:cytosol"/>
    <property type="evidence" value="ECO:0007669"/>
    <property type="project" value="TreeGrafter"/>
</dbReference>
<dbReference type="GO" id="GO:0015935">
    <property type="term" value="C:small ribosomal subunit"/>
    <property type="evidence" value="ECO:0007669"/>
    <property type="project" value="TreeGrafter"/>
</dbReference>
<dbReference type="GO" id="GO:0019843">
    <property type="term" value="F:rRNA binding"/>
    <property type="evidence" value="ECO:0007669"/>
    <property type="project" value="UniProtKB-UniRule"/>
</dbReference>
<dbReference type="GO" id="GO:0003735">
    <property type="term" value="F:structural constituent of ribosome"/>
    <property type="evidence" value="ECO:0007669"/>
    <property type="project" value="InterPro"/>
</dbReference>
<dbReference type="GO" id="GO:0000049">
    <property type="term" value="F:tRNA binding"/>
    <property type="evidence" value="ECO:0007669"/>
    <property type="project" value="UniProtKB-UniRule"/>
</dbReference>
<dbReference type="GO" id="GO:0006412">
    <property type="term" value="P:translation"/>
    <property type="evidence" value="ECO:0007669"/>
    <property type="project" value="UniProtKB-UniRule"/>
</dbReference>
<dbReference type="FunFam" id="1.10.8.50:FF:000001">
    <property type="entry name" value="30S ribosomal protein S13"/>
    <property type="match status" value="1"/>
</dbReference>
<dbReference type="FunFam" id="4.10.910.10:FF:000001">
    <property type="entry name" value="30S ribosomal protein S13"/>
    <property type="match status" value="1"/>
</dbReference>
<dbReference type="Gene3D" id="1.10.8.50">
    <property type="match status" value="1"/>
</dbReference>
<dbReference type="Gene3D" id="4.10.910.10">
    <property type="entry name" value="30s ribosomal protein s13, domain 2"/>
    <property type="match status" value="1"/>
</dbReference>
<dbReference type="HAMAP" id="MF_01315">
    <property type="entry name" value="Ribosomal_uS13"/>
    <property type="match status" value="1"/>
</dbReference>
<dbReference type="InterPro" id="IPR027437">
    <property type="entry name" value="Rbsml_uS13_C"/>
</dbReference>
<dbReference type="InterPro" id="IPR001892">
    <property type="entry name" value="Ribosomal_uS13"/>
</dbReference>
<dbReference type="InterPro" id="IPR010979">
    <property type="entry name" value="Ribosomal_uS13-like_H2TH"/>
</dbReference>
<dbReference type="InterPro" id="IPR019980">
    <property type="entry name" value="Ribosomal_uS13_bac-type"/>
</dbReference>
<dbReference type="InterPro" id="IPR018269">
    <property type="entry name" value="Ribosomal_uS13_CS"/>
</dbReference>
<dbReference type="NCBIfam" id="TIGR03631">
    <property type="entry name" value="uS13_bact"/>
    <property type="match status" value="1"/>
</dbReference>
<dbReference type="PANTHER" id="PTHR10871">
    <property type="entry name" value="30S RIBOSOMAL PROTEIN S13/40S RIBOSOMAL PROTEIN S18"/>
    <property type="match status" value="1"/>
</dbReference>
<dbReference type="PANTHER" id="PTHR10871:SF1">
    <property type="entry name" value="SMALL RIBOSOMAL SUBUNIT PROTEIN US13M"/>
    <property type="match status" value="1"/>
</dbReference>
<dbReference type="Pfam" id="PF00416">
    <property type="entry name" value="Ribosomal_S13"/>
    <property type="match status" value="1"/>
</dbReference>
<dbReference type="PIRSF" id="PIRSF002134">
    <property type="entry name" value="Ribosomal_S13"/>
    <property type="match status" value="1"/>
</dbReference>
<dbReference type="SUPFAM" id="SSF46946">
    <property type="entry name" value="S13-like H2TH domain"/>
    <property type="match status" value="1"/>
</dbReference>
<dbReference type="PROSITE" id="PS00646">
    <property type="entry name" value="RIBOSOMAL_S13_1"/>
    <property type="match status" value="1"/>
</dbReference>
<dbReference type="PROSITE" id="PS50159">
    <property type="entry name" value="RIBOSOMAL_S13_2"/>
    <property type="match status" value="1"/>
</dbReference>
<organism>
    <name type="scientific">Syntrophus aciditrophicus (strain SB)</name>
    <dbReference type="NCBI Taxonomy" id="56780"/>
    <lineage>
        <taxon>Bacteria</taxon>
        <taxon>Pseudomonadati</taxon>
        <taxon>Thermodesulfobacteriota</taxon>
        <taxon>Syntrophia</taxon>
        <taxon>Syntrophales</taxon>
        <taxon>Syntrophaceae</taxon>
        <taxon>Syntrophus</taxon>
    </lineage>
</organism>
<keyword id="KW-1185">Reference proteome</keyword>
<keyword id="KW-0687">Ribonucleoprotein</keyword>
<keyword id="KW-0689">Ribosomal protein</keyword>
<keyword id="KW-0694">RNA-binding</keyword>
<keyword id="KW-0699">rRNA-binding</keyword>
<keyword id="KW-0820">tRNA-binding</keyword>
<gene>
    <name evidence="1" type="primary">rpsM</name>
    <name type="ordered locus">SYNAS_03250</name>
    <name type="ORF">SYN_01598</name>
</gene>
<protein>
    <recommendedName>
        <fullName evidence="1">Small ribosomal subunit protein uS13</fullName>
    </recommendedName>
    <alternativeName>
        <fullName evidence="3">30S ribosomal protein S13</fullName>
    </alternativeName>
</protein>
<comment type="function">
    <text evidence="1">Located at the top of the head of the 30S subunit, it contacts several helices of the 16S rRNA. In the 70S ribosome it contacts the 23S rRNA (bridge B1a) and protein L5 of the 50S subunit (bridge B1b), connecting the 2 subunits; these bridges are implicated in subunit movement. Contacts the tRNAs in the A and P-sites.</text>
</comment>
<comment type="subunit">
    <text evidence="1">Part of the 30S ribosomal subunit. Forms a loose heterodimer with protein S19. Forms two bridges to the 50S subunit in the 70S ribosome.</text>
</comment>
<comment type="similarity">
    <text evidence="1">Belongs to the universal ribosomal protein uS13 family.</text>
</comment>